<reference key="1">
    <citation type="journal article" date="2007" name="PLoS Genet.">
        <title>The complete genome sequence of Yersinia pseudotuberculosis IP31758, the causative agent of Far East scarlet-like fever.</title>
        <authorList>
            <person name="Eppinger M."/>
            <person name="Rosovitz M.J."/>
            <person name="Fricke W.F."/>
            <person name="Rasko D.A."/>
            <person name="Kokorina G."/>
            <person name="Fayolle C."/>
            <person name="Lindler L.E."/>
            <person name="Carniel E."/>
            <person name="Ravel J."/>
        </authorList>
    </citation>
    <scope>NUCLEOTIDE SEQUENCE [LARGE SCALE GENOMIC DNA]</scope>
    <source>
        <strain>IP 31758</strain>
    </source>
</reference>
<comment type="function">
    <text evidence="1">NQR complex catalyzes the reduction of ubiquinone-1 to ubiquinol by two successive reactions, coupled with the transport of Na(+) ions from the cytoplasm to the periplasm. The first step is catalyzed by NqrF, which accepts electrons from NADH and reduces ubiquinone-1 to ubisemiquinone by a one-electron transfer pathway.</text>
</comment>
<comment type="catalytic activity">
    <reaction evidence="1">
        <text>a ubiquinone + n Na(+)(in) + NADH + H(+) = a ubiquinol + n Na(+)(out) + NAD(+)</text>
        <dbReference type="Rhea" id="RHEA:47748"/>
        <dbReference type="Rhea" id="RHEA-COMP:9565"/>
        <dbReference type="Rhea" id="RHEA-COMP:9566"/>
        <dbReference type="ChEBI" id="CHEBI:15378"/>
        <dbReference type="ChEBI" id="CHEBI:16389"/>
        <dbReference type="ChEBI" id="CHEBI:17976"/>
        <dbReference type="ChEBI" id="CHEBI:29101"/>
        <dbReference type="ChEBI" id="CHEBI:57540"/>
        <dbReference type="ChEBI" id="CHEBI:57945"/>
        <dbReference type="EC" id="7.2.1.1"/>
    </reaction>
</comment>
<comment type="cofactor">
    <cofactor evidence="1">
        <name>[2Fe-2S] cluster</name>
        <dbReference type="ChEBI" id="CHEBI:190135"/>
    </cofactor>
    <text evidence="1">Binds 1 [2Fe-2S] cluster.</text>
</comment>
<comment type="cofactor">
    <cofactor evidence="1">
        <name>FAD</name>
        <dbReference type="ChEBI" id="CHEBI:57692"/>
    </cofactor>
</comment>
<comment type="subunit">
    <text evidence="1">Composed of six subunits; NqrA, NqrB, NqrC, NqrD, NqrE and NqrF.</text>
</comment>
<comment type="subcellular location">
    <subcellularLocation>
        <location evidence="1">Cell inner membrane</location>
        <topology evidence="1">Single-pass membrane protein</topology>
    </subcellularLocation>
</comment>
<comment type="similarity">
    <text evidence="1">Belongs to the NqrF family.</text>
</comment>
<dbReference type="EC" id="7.2.1.1" evidence="1"/>
<dbReference type="EMBL" id="CP000720">
    <property type="protein sequence ID" value="ABS48700.1"/>
    <property type="molecule type" value="Genomic_DNA"/>
</dbReference>
<dbReference type="RefSeq" id="WP_002208711.1">
    <property type="nucleotide sequence ID" value="NC_009708.1"/>
</dbReference>
<dbReference type="SMR" id="A7FLJ3"/>
<dbReference type="GeneID" id="57975484"/>
<dbReference type="KEGG" id="ypi:YpsIP31758_3161"/>
<dbReference type="HOGENOM" id="CLU_003827_7_2_6"/>
<dbReference type="Proteomes" id="UP000002412">
    <property type="component" value="Chromosome"/>
</dbReference>
<dbReference type="GO" id="GO:0005886">
    <property type="term" value="C:plasma membrane"/>
    <property type="evidence" value="ECO:0007669"/>
    <property type="project" value="UniProtKB-SubCell"/>
</dbReference>
<dbReference type="GO" id="GO:0051537">
    <property type="term" value="F:2 iron, 2 sulfur cluster binding"/>
    <property type="evidence" value="ECO:0007669"/>
    <property type="project" value="UniProtKB-KW"/>
</dbReference>
<dbReference type="GO" id="GO:0009055">
    <property type="term" value="F:electron transfer activity"/>
    <property type="evidence" value="ECO:0007669"/>
    <property type="project" value="UniProtKB-UniRule"/>
</dbReference>
<dbReference type="GO" id="GO:0046872">
    <property type="term" value="F:metal ion binding"/>
    <property type="evidence" value="ECO:0007669"/>
    <property type="project" value="UniProtKB-KW"/>
</dbReference>
<dbReference type="GO" id="GO:0016655">
    <property type="term" value="F:oxidoreductase activity, acting on NAD(P)H, quinone or similar compound as acceptor"/>
    <property type="evidence" value="ECO:0007669"/>
    <property type="project" value="InterPro"/>
</dbReference>
<dbReference type="GO" id="GO:0006814">
    <property type="term" value="P:sodium ion transport"/>
    <property type="evidence" value="ECO:0007669"/>
    <property type="project" value="UniProtKB-UniRule"/>
</dbReference>
<dbReference type="CDD" id="cd06188">
    <property type="entry name" value="NADH_quinone_reductase"/>
    <property type="match status" value="1"/>
</dbReference>
<dbReference type="FunFam" id="3.40.50.80:FF:000014">
    <property type="entry name" value="Na(+)-translocating NADH-quinone reductase subunit F"/>
    <property type="match status" value="1"/>
</dbReference>
<dbReference type="Gene3D" id="3.10.20.30">
    <property type="match status" value="1"/>
</dbReference>
<dbReference type="Gene3D" id="3.40.50.80">
    <property type="entry name" value="Nucleotide-binding domain of ferredoxin-NADP reductase (FNR) module"/>
    <property type="match status" value="1"/>
</dbReference>
<dbReference type="Gene3D" id="2.40.30.10">
    <property type="entry name" value="Translation factors"/>
    <property type="match status" value="1"/>
</dbReference>
<dbReference type="HAMAP" id="MF_00430">
    <property type="entry name" value="NqrF"/>
    <property type="match status" value="1"/>
</dbReference>
<dbReference type="InterPro" id="IPR036010">
    <property type="entry name" value="2Fe-2S_ferredoxin-like_sf"/>
</dbReference>
<dbReference type="InterPro" id="IPR001041">
    <property type="entry name" value="2Fe-2S_ferredoxin-type"/>
</dbReference>
<dbReference type="InterPro" id="IPR012675">
    <property type="entry name" value="Beta-grasp_dom_sf"/>
</dbReference>
<dbReference type="InterPro" id="IPR008333">
    <property type="entry name" value="Cbr1-like_FAD-bd_dom"/>
</dbReference>
<dbReference type="InterPro" id="IPR017927">
    <property type="entry name" value="FAD-bd_FR_type"/>
</dbReference>
<dbReference type="InterPro" id="IPR001709">
    <property type="entry name" value="Flavoprot_Pyr_Nucl_cyt_Rdtase"/>
</dbReference>
<dbReference type="InterPro" id="IPR039261">
    <property type="entry name" value="FNR_nucleotide-bd"/>
</dbReference>
<dbReference type="InterPro" id="IPR010205">
    <property type="entry name" value="NqrF"/>
</dbReference>
<dbReference type="InterPro" id="IPR001433">
    <property type="entry name" value="OxRdtase_FAD/NAD-bd"/>
</dbReference>
<dbReference type="InterPro" id="IPR017938">
    <property type="entry name" value="Riboflavin_synthase-like_b-brl"/>
</dbReference>
<dbReference type="NCBIfam" id="TIGR01941">
    <property type="entry name" value="nqrF"/>
    <property type="match status" value="1"/>
</dbReference>
<dbReference type="PANTHER" id="PTHR43644">
    <property type="entry name" value="NA(+)-TRANSLOCATING NADH-QUINONE REDUCTASE SUBUNIT"/>
    <property type="match status" value="1"/>
</dbReference>
<dbReference type="PANTHER" id="PTHR43644:SF1">
    <property type="entry name" value="NAD(P)H-FLAVIN REDUCTASE"/>
    <property type="match status" value="1"/>
</dbReference>
<dbReference type="Pfam" id="PF00970">
    <property type="entry name" value="FAD_binding_6"/>
    <property type="match status" value="1"/>
</dbReference>
<dbReference type="Pfam" id="PF00111">
    <property type="entry name" value="Fer2"/>
    <property type="match status" value="1"/>
</dbReference>
<dbReference type="Pfam" id="PF00175">
    <property type="entry name" value="NAD_binding_1"/>
    <property type="match status" value="1"/>
</dbReference>
<dbReference type="PIRSF" id="PIRSF000044">
    <property type="entry name" value="Cis_Diol_DH_RD"/>
    <property type="match status" value="1"/>
</dbReference>
<dbReference type="PRINTS" id="PR00371">
    <property type="entry name" value="FPNCR"/>
</dbReference>
<dbReference type="SUPFAM" id="SSF54292">
    <property type="entry name" value="2Fe-2S ferredoxin-like"/>
    <property type="match status" value="1"/>
</dbReference>
<dbReference type="SUPFAM" id="SSF52343">
    <property type="entry name" value="Ferredoxin reductase-like, C-terminal NADP-linked domain"/>
    <property type="match status" value="1"/>
</dbReference>
<dbReference type="SUPFAM" id="SSF63380">
    <property type="entry name" value="Riboflavin synthase domain-like"/>
    <property type="match status" value="1"/>
</dbReference>
<dbReference type="PROSITE" id="PS51085">
    <property type="entry name" value="2FE2S_FER_2"/>
    <property type="match status" value="1"/>
</dbReference>
<dbReference type="PROSITE" id="PS51384">
    <property type="entry name" value="FAD_FR"/>
    <property type="match status" value="1"/>
</dbReference>
<keyword id="KW-0001">2Fe-2S</keyword>
<keyword id="KW-0997">Cell inner membrane</keyword>
<keyword id="KW-1003">Cell membrane</keyword>
<keyword id="KW-0274">FAD</keyword>
<keyword id="KW-0285">Flavoprotein</keyword>
<keyword id="KW-0406">Ion transport</keyword>
<keyword id="KW-0408">Iron</keyword>
<keyword id="KW-0411">Iron-sulfur</keyword>
<keyword id="KW-0472">Membrane</keyword>
<keyword id="KW-0479">Metal-binding</keyword>
<keyword id="KW-0520">NAD</keyword>
<keyword id="KW-0915">Sodium</keyword>
<keyword id="KW-0739">Sodium transport</keyword>
<keyword id="KW-1278">Translocase</keyword>
<keyword id="KW-0812">Transmembrane</keyword>
<keyword id="KW-1133">Transmembrane helix</keyword>
<keyword id="KW-0813">Transport</keyword>
<keyword id="KW-0830">Ubiquinone</keyword>
<name>NQRF_YERP3</name>
<evidence type="ECO:0000255" key="1">
    <source>
        <dbReference type="HAMAP-Rule" id="MF_00430"/>
    </source>
</evidence>
<accession>A7FLJ3</accession>
<gene>
    <name evidence="1" type="primary">nqrF</name>
    <name type="ordered locus">YpsIP31758_3161</name>
</gene>
<feature type="chain" id="PRO_1000080597" description="Na(+)-translocating NADH-quinone reductase subunit F">
    <location>
        <begin position="1"/>
        <end position="407"/>
    </location>
</feature>
<feature type="transmembrane region" description="Helical" evidence="1">
    <location>
        <begin position="3"/>
        <end position="23"/>
    </location>
</feature>
<feature type="domain" description="2Fe-2S ferredoxin-type" evidence="1">
    <location>
        <begin position="32"/>
        <end position="126"/>
    </location>
</feature>
<feature type="domain" description="FAD-binding FR-type" evidence="1">
    <location>
        <begin position="129"/>
        <end position="269"/>
    </location>
</feature>
<feature type="binding site" evidence="1">
    <location>
        <position position="69"/>
    </location>
    <ligand>
        <name>[2Fe-2S] cluster</name>
        <dbReference type="ChEBI" id="CHEBI:190135"/>
    </ligand>
</feature>
<feature type="binding site" evidence="1">
    <location>
        <position position="75"/>
    </location>
    <ligand>
        <name>[2Fe-2S] cluster</name>
        <dbReference type="ChEBI" id="CHEBI:190135"/>
    </ligand>
</feature>
<feature type="binding site" evidence="1">
    <location>
        <position position="78"/>
    </location>
    <ligand>
        <name>[2Fe-2S] cluster</name>
        <dbReference type="ChEBI" id="CHEBI:190135"/>
    </ligand>
</feature>
<feature type="binding site" evidence="1">
    <location>
        <position position="110"/>
    </location>
    <ligand>
        <name>[2Fe-2S] cluster</name>
        <dbReference type="ChEBI" id="CHEBI:190135"/>
    </ligand>
</feature>
<protein>
    <recommendedName>
        <fullName evidence="1">Na(+)-translocating NADH-quinone reductase subunit F</fullName>
        <shortName evidence="1">Na(+)-NQR subunit F</shortName>
        <shortName evidence="1">Na(+)-translocating NQR subunit F</shortName>
        <ecNumber evidence="1">7.2.1.1</ecNumber>
    </recommendedName>
    <alternativeName>
        <fullName evidence="1">NQR complex subunit F</fullName>
    </alternativeName>
    <alternativeName>
        <fullName evidence="1">NQR-1 subunit F</fullName>
    </alternativeName>
</protein>
<sequence length="407" mass="45455">MEIILGVVMFTLIVLALTVMILFAKSKLVNTGDITVEINEDEDKSFTAPAGDKLLNMLSSHGIFVSSACGGGGSCGQCRVTIKEGGGDILPTELSHISKREAKEGCRLACQVNVKQNLKIELPEEIFGVKKWTCEVISNDNKATFIKELKLKIPDGDVVPFRAGGFIQIEAEPHTVKYADFDVPTEYRGDWDKFNLFRFESVVTEPTVRAYSMANYPEEHGIILLNVRIATPPPSVPDAPPGIMSSYIWSLKPGDKVVISGPFGEFFAKDTDAEMVFIGGGAGMAPMRSHIFDQLKRLHSKRKISFWYGARSRREMFYEEDFDQLQAENDNFRWHVALSDPQPEDNWTGYTGFIHNVLLENYLKDHPAPEDCEFYMCGPPMMNAAVIKMLKDLGVEDENIMLDDFGG</sequence>
<organism>
    <name type="scientific">Yersinia pseudotuberculosis serotype O:1b (strain IP 31758)</name>
    <dbReference type="NCBI Taxonomy" id="349747"/>
    <lineage>
        <taxon>Bacteria</taxon>
        <taxon>Pseudomonadati</taxon>
        <taxon>Pseudomonadota</taxon>
        <taxon>Gammaproteobacteria</taxon>
        <taxon>Enterobacterales</taxon>
        <taxon>Yersiniaceae</taxon>
        <taxon>Yersinia</taxon>
    </lineage>
</organism>
<proteinExistence type="inferred from homology"/>